<sequence length="931" mass="104696">MDSVATDSKAFTSADFDSAGIAAAVDALAKQHSGREDMFRAAVVQFLKAELVKARAAAQAQLLQDRHGRHCAERLCVVQDEIIRILYAAATEHLYRSDVPSGAERMAVVATGGYGRGLMAPESDIDLLFILPYKQTAWGEQVAEAILYSLWDMGLKVGHATRSVDESIRQARGDMTIRTAILETRYLAGDKPLYDELVQRFDTEVVQGTAAEFVAAKLAEREERHRRGGQSRYLVEPNVKDGKGGLRDLHTLFWIAKYVYRVRETAELVERGVFDAHEYRTFRRCSDFLWSVRCNLHFVSGRPEERLSFDLQREIAVRLGYTSHPGMQDVERFMKHYFLVAKQVGNLTAILCAKLEDQQAKAAPVLSRMISRLTTGSTWRRVPESDDFIVDNNRINLAAPDVFKHDPVNLIRIFRLAQKNNLAFHPDAMRAVTRSLNMINAELRENPEANRLFMEILTSNDAETVLRRMNETGVLGHFISAFGRIVSMMQFNMYHHYTVDEHLIRCIGFLQEIERGGHDEFVLASDLMRKIRPEHRAVIYITVLLHDVAKGRPEDHSVAGAKIARRLCPRLGFNNADTELVAWLIEEHLTMSTVAQSRDLSDRRTIEKFAAVVQSVEQMKLLTILTTADIRGVGPGVWNGWKAQLLRTLYYETEPVLTGGFSEVNRAKRITAAQAEFRNAFTDWPEDELNTYIGRHYPAYWLKVELPRKIRHARFVRSSEDAGHKLAINVGFDPARGVTELTIFAMDHPWLLSIIAGACASAGANIVDAQIYTTTDGRALDTIAISREYERDEDEGRRATRIGETIEQVLEGKLRLPDAVARRTTRGKQHKAFSVEPEVSINNQWSELYTVIEVSGLDRPGLLYELTTAISKLNLNIASAHVATFGERARDVFYVTDLLGAQINAPTRQAAIKSALLHLLASEDAAAQPAA</sequence>
<comment type="function">
    <text evidence="1">Modifies, by uridylylation and deuridylylation, the PII regulatory proteins (GlnB and homologs), in response to the nitrogen status of the cell that GlnD senses through the glutamine level. Under low glutamine levels, catalyzes the conversion of the PII proteins and UTP to PII-UMP and PPi, while under higher glutamine levels, GlnD hydrolyzes PII-UMP to PII and UMP (deuridylylation). Thus, controls uridylylation state and activity of the PII proteins, and plays an important role in the regulation of nitrogen fixation and metabolism.</text>
</comment>
<comment type="catalytic activity">
    <reaction evidence="1">
        <text>[protein-PII]-L-tyrosine + UTP = [protein-PII]-uridylyl-L-tyrosine + diphosphate</text>
        <dbReference type="Rhea" id="RHEA:13673"/>
        <dbReference type="Rhea" id="RHEA-COMP:12147"/>
        <dbReference type="Rhea" id="RHEA-COMP:12148"/>
        <dbReference type="ChEBI" id="CHEBI:33019"/>
        <dbReference type="ChEBI" id="CHEBI:46398"/>
        <dbReference type="ChEBI" id="CHEBI:46858"/>
        <dbReference type="ChEBI" id="CHEBI:90602"/>
        <dbReference type="EC" id="2.7.7.59"/>
    </reaction>
</comment>
<comment type="catalytic activity">
    <reaction evidence="1">
        <text>[protein-PII]-uridylyl-L-tyrosine + H2O = [protein-PII]-L-tyrosine + UMP + H(+)</text>
        <dbReference type="Rhea" id="RHEA:48600"/>
        <dbReference type="Rhea" id="RHEA-COMP:12147"/>
        <dbReference type="Rhea" id="RHEA-COMP:12148"/>
        <dbReference type="ChEBI" id="CHEBI:15377"/>
        <dbReference type="ChEBI" id="CHEBI:15378"/>
        <dbReference type="ChEBI" id="CHEBI:46858"/>
        <dbReference type="ChEBI" id="CHEBI:57865"/>
        <dbReference type="ChEBI" id="CHEBI:90602"/>
    </reaction>
</comment>
<comment type="cofactor">
    <cofactor evidence="1">
        <name>Mg(2+)</name>
        <dbReference type="ChEBI" id="CHEBI:18420"/>
    </cofactor>
</comment>
<comment type="activity regulation">
    <text evidence="1">Uridylyltransferase (UTase) activity is inhibited by glutamine, while glutamine activates uridylyl-removing (UR) activity.</text>
</comment>
<comment type="domain">
    <text evidence="1">Has four distinct domains: an N-terminal nucleotidyltransferase (NT) domain responsible for UTase activity, a central HD domain that encodes UR activity, and two C-terminal ACT domains that seem to have a role in glutamine sensing.</text>
</comment>
<comment type="similarity">
    <text evidence="1">Belongs to the GlnD family.</text>
</comment>
<proteinExistence type="inferred from homology"/>
<protein>
    <recommendedName>
        <fullName evidence="1">Bifunctional uridylyltransferase/uridylyl-removing enzyme</fullName>
        <shortName evidence="1">UTase/UR</shortName>
    </recommendedName>
    <alternativeName>
        <fullName evidence="1">Bifunctional [protein-PII] modification enzyme</fullName>
    </alternativeName>
    <alternativeName>
        <fullName evidence="1">Bifunctional nitrogen sensor protein</fullName>
    </alternativeName>
    <domain>
        <recommendedName>
            <fullName evidence="1">[Protein-PII] uridylyltransferase</fullName>
            <shortName evidence="1">PII uridylyltransferase</shortName>
            <shortName evidence="1">UTase</shortName>
            <ecNumber evidence="1">2.7.7.59</ecNumber>
        </recommendedName>
    </domain>
    <domain>
        <recommendedName>
            <fullName evidence="1">[Protein-PII]-UMP uridylyl-removing enzyme</fullName>
            <shortName evidence="1">UR</shortName>
            <ecNumber evidence="1">3.1.4.-</ecNumber>
        </recommendedName>
    </domain>
</protein>
<gene>
    <name evidence="1" type="primary">glnD</name>
    <name type="ordered locus">BRADO0530</name>
</gene>
<dbReference type="EC" id="2.7.7.59" evidence="1"/>
<dbReference type="EC" id="3.1.4.-" evidence="1"/>
<dbReference type="EMBL" id="CU234118">
    <property type="protein sequence ID" value="CAL74469.1"/>
    <property type="molecule type" value="Genomic_DNA"/>
</dbReference>
<dbReference type="RefSeq" id="WP_011923740.1">
    <property type="nucleotide sequence ID" value="NC_009445.1"/>
</dbReference>
<dbReference type="SMR" id="A4YKP3"/>
<dbReference type="STRING" id="114615.BRADO0530"/>
<dbReference type="KEGG" id="bra:BRADO0530"/>
<dbReference type="eggNOG" id="COG2844">
    <property type="taxonomic scope" value="Bacteria"/>
</dbReference>
<dbReference type="HOGENOM" id="CLU_012833_1_0_5"/>
<dbReference type="OrthoDB" id="9758038at2"/>
<dbReference type="Proteomes" id="UP000001994">
    <property type="component" value="Chromosome"/>
</dbReference>
<dbReference type="GO" id="GO:0008773">
    <property type="term" value="F:[protein-PII] uridylyltransferase activity"/>
    <property type="evidence" value="ECO:0007669"/>
    <property type="project" value="UniProtKB-UniRule"/>
</dbReference>
<dbReference type="GO" id="GO:0008081">
    <property type="term" value="F:phosphoric diester hydrolase activity"/>
    <property type="evidence" value="ECO:0007669"/>
    <property type="project" value="UniProtKB-UniRule"/>
</dbReference>
<dbReference type="GO" id="GO:0009399">
    <property type="term" value="P:nitrogen fixation"/>
    <property type="evidence" value="ECO:0007669"/>
    <property type="project" value="UniProtKB-UniRule"/>
</dbReference>
<dbReference type="GO" id="GO:0006808">
    <property type="term" value="P:regulation of nitrogen utilization"/>
    <property type="evidence" value="ECO:0007669"/>
    <property type="project" value="UniProtKB-UniRule"/>
</dbReference>
<dbReference type="CDD" id="cd04899">
    <property type="entry name" value="ACT_ACR-UUR-like_2"/>
    <property type="match status" value="1"/>
</dbReference>
<dbReference type="CDD" id="cd04900">
    <property type="entry name" value="ACT_UUR-like_1"/>
    <property type="match status" value="1"/>
</dbReference>
<dbReference type="CDD" id="cd05401">
    <property type="entry name" value="NT_GlnE_GlnD_like"/>
    <property type="match status" value="1"/>
</dbReference>
<dbReference type="Gene3D" id="3.30.70.260">
    <property type="match status" value="1"/>
</dbReference>
<dbReference type="Gene3D" id="3.30.460.10">
    <property type="entry name" value="Beta Polymerase, domain 2"/>
    <property type="match status" value="1"/>
</dbReference>
<dbReference type="Gene3D" id="1.10.3090.10">
    <property type="entry name" value="cca-adding enzyme, domain 2"/>
    <property type="match status" value="1"/>
</dbReference>
<dbReference type="HAMAP" id="MF_00277">
    <property type="entry name" value="PII_uridylyl_transf"/>
    <property type="match status" value="1"/>
</dbReference>
<dbReference type="InterPro" id="IPR045865">
    <property type="entry name" value="ACT-like_dom_sf"/>
</dbReference>
<dbReference type="InterPro" id="IPR002912">
    <property type="entry name" value="ACT_dom"/>
</dbReference>
<dbReference type="InterPro" id="IPR003607">
    <property type="entry name" value="HD/PDEase_dom"/>
</dbReference>
<dbReference type="InterPro" id="IPR006674">
    <property type="entry name" value="HD_domain"/>
</dbReference>
<dbReference type="InterPro" id="IPR043519">
    <property type="entry name" value="NT_sf"/>
</dbReference>
<dbReference type="InterPro" id="IPR013546">
    <property type="entry name" value="PII_UdlTrfase/GS_AdlTrfase"/>
</dbReference>
<dbReference type="InterPro" id="IPR002934">
    <property type="entry name" value="Polymerase_NTP_transf_dom"/>
</dbReference>
<dbReference type="InterPro" id="IPR010043">
    <property type="entry name" value="UTase/UR"/>
</dbReference>
<dbReference type="NCBIfam" id="NF003467">
    <property type="entry name" value="PRK05092.1"/>
    <property type="match status" value="1"/>
</dbReference>
<dbReference type="NCBIfam" id="TIGR01693">
    <property type="entry name" value="UTase_glnD"/>
    <property type="match status" value="1"/>
</dbReference>
<dbReference type="PANTHER" id="PTHR47320">
    <property type="entry name" value="BIFUNCTIONAL URIDYLYLTRANSFERASE/URIDYLYL-REMOVING ENZYME"/>
    <property type="match status" value="1"/>
</dbReference>
<dbReference type="PANTHER" id="PTHR47320:SF1">
    <property type="entry name" value="BIFUNCTIONAL URIDYLYLTRANSFERASE_URIDYLYL-REMOVING ENZYME"/>
    <property type="match status" value="1"/>
</dbReference>
<dbReference type="Pfam" id="PF01842">
    <property type="entry name" value="ACT"/>
    <property type="match status" value="1"/>
</dbReference>
<dbReference type="Pfam" id="PF08335">
    <property type="entry name" value="GlnD_UR_UTase"/>
    <property type="match status" value="1"/>
</dbReference>
<dbReference type="Pfam" id="PF01966">
    <property type="entry name" value="HD"/>
    <property type="match status" value="1"/>
</dbReference>
<dbReference type="Pfam" id="PF01909">
    <property type="entry name" value="NTP_transf_2"/>
    <property type="match status" value="1"/>
</dbReference>
<dbReference type="PIRSF" id="PIRSF006288">
    <property type="entry name" value="PII_uridyltransf"/>
    <property type="match status" value="1"/>
</dbReference>
<dbReference type="SMART" id="SM00471">
    <property type="entry name" value="HDc"/>
    <property type="match status" value="1"/>
</dbReference>
<dbReference type="SUPFAM" id="SSF55021">
    <property type="entry name" value="ACT-like"/>
    <property type="match status" value="2"/>
</dbReference>
<dbReference type="SUPFAM" id="SSF81301">
    <property type="entry name" value="Nucleotidyltransferase"/>
    <property type="match status" value="1"/>
</dbReference>
<dbReference type="SUPFAM" id="SSF81593">
    <property type="entry name" value="Nucleotidyltransferase substrate binding subunit/domain"/>
    <property type="match status" value="1"/>
</dbReference>
<dbReference type="SUPFAM" id="SSF81891">
    <property type="entry name" value="Poly A polymerase C-terminal region-like"/>
    <property type="match status" value="1"/>
</dbReference>
<dbReference type="PROSITE" id="PS51671">
    <property type="entry name" value="ACT"/>
    <property type="match status" value="2"/>
</dbReference>
<dbReference type="PROSITE" id="PS51831">
    <property type="entry name" value="HD"/>
    <property type="match status" value="1"/>
</dbReference>
<evidence type="ECO:0000255" key="1">
    <source>
        <dbReference type="HAMAP-Rule" id="MF_00277"/>
    </source>
</evidence>
<evidence type="ECO:0000255" key="2">
    <source>
        <dbReference type="PROSITE-ProRule" id="PRU01175"/>
    </source>
</evidence>
<organism>
    <name type="scientific">Bradyrhizobium sp. (strain ORS 278)</name>
    <dbReference type="NCBI Taxonomy" id="114615"/>
    <lineage>
        <taxon>Bacteria</taxon>
        <taxon>Pseudomonadati</taxon>
        <taxon>Pseudomonadota</taxon>
        <taxon>Alphaproteobacteria</taxon>
        <taxon>Hyphomicrobiales</taxon>
        <taxon>Nitrobacteraceae</taxon>
        <taxon>Bradyrhizobium</taxon>
    </lineage>
</organism>
<name>GLND_BRASO</name>
<keyword id="KW-0378">Hydrolase</keyword>
<keyword id="KW-0460">Magnesium</keyword>
<keyword id="KW-0511">Multifunctional enzyme</keyword>
<keyword id="KW-0535">Nitrogen fixation</keyword>
<keyword id="KW-0548">Nucleotidyltransferase</keyword>
<keyword id="KW-1185">Reference proteome</keyword>
<keyword id="KW-0677">Repeat</keyword>
<keyword id="KW-0808">Transferase</keyword>
<accession>A4YKP3</accession>
<feature type="chain" id="PRO_1000022328" description="Bifunctional uridylyltransferase/uridylyl-removing enzyme">
    <location>
        <begin position="1"/>
        <end position="931"/>
    </location>
</feature>
<feature type="domain" description="HD" evidence="2">
    <location>
        <begin position="499"/>
        <end position="622"/>
    </location>
</feature>
<feature type="domain" description="ACT 1" evidence="1">
    <location>
        <begin position="740"/>
        <end position="822"/>
    </location>
</feature>
<feature type="domain" description="ACT 2" evidence="1">
    <location>
        <begin position="851"/>
        <end position="931"/>
    </location>
</feature>
<feature type="region of interest" description="Uridylyltransferase">
    <location>
        <begin position="1"/>
        <end position="383"/>
    </location>
</feature>
<feature type="region of interest" description="Uridylyl-removing">
    <location>
        <begin position="384"/>
        <end position="739"/>
    </location>
</feature>
<reference key="1">
    <citation type="journal article" date="2007" name="Science">
        <title>Legumes symbioses: absence of nod genes in photosynthetic bradyrhizobia.</title>
        <authorList>
            <person name="Giraud E."/>
            <person name="Moulin L."/>
            <person name="Vallenet D."/>
            <person name="Barbe V."/>
            <person name="Cytryn E."/>
            <person name="Avarre J.-C."/>
            <person name="Jaubert M."/>
            <person name="Simon D."/>
            <person name="Cartieaux F."/>
            <person name="Prin Y."/>
            <person name="Bena G."/>
            <person name="Hannibal L."/>
            <person name="Fardoux J."/>
            <person name="Kojadinovic M."/>
            <person name="Vuillet L."/>
            <person name="Lajus A."/>
            <person name="Cruveiller S."/>
            <person name="Rouy Z."/>
            <person name="Mangenot S."/>
            <person name="Segurens B."/>
            <person name="Dossat C."/>
            <person name="Franck W.L."/>
            <person name="Chang W.-S."/>
            <person name="Saunders E."/>
            <person name="Bruce D."/>
            <person name="Richardson P."/>
            <person name="Normand P."/>
            <person name="Dreyfus B."/>
            <person name="Pignol D."/>
            <person name="Stacey G."/>
            <person name="Emerich D."/>
            <person name="Vermeglio A."/>
            <person name="Medigue C."/>
            <person name="Sadowsky M."/>
        </authorList>
    </citation>
    <scope>NUCLEOTIDE SEQUENCE [LARGE SCALE GENOMIC DNA]</scope>
    <source>
        <strain>ORS 278</strain>
    </source>
</reference>